<protein>
    <recommendedName>
        <fullName>Putative diacyglycerol O-acyltransferase Rv2484c</fullName>
        <ecNumber evidence="1">2.3.1.20</ecNumber>
    </recommendedName>
    <alternativeName>
        <fullName>Putative triacylglycerol synthase Rv2484c</fullName>
    </alternativeName>
</protein>
<comment type="function">
    <text evidence="3">Upon expression in E.coli functions very weakly as a triacylglycerol synthase, making triacylglycerol (TG) from diolein and long-chain fatty acyl-CoA. Has no wax synthase activity.</text>
</comment>
<comment type="catalytic activity">
    <reaction evidence="1">
        <text>an acyl-CoA + a 1,2-diacyl-sn-glycerol = a triacyl-sn-glycerol + CoA</text>
        <dbReference type="Rhea" id="RHEA:10868"/>
        <dbReference type="ChEBI" id="CHEBI:17815"/>
        <dbReference type="ChEBI" id="CHEBI:57287"/>
        <dbReference type="ChEBI" id="CHEBI:58342"/>
        <dbReference type="ChEBI" id="CHEBI:64615"/>
        <dbReference type="EC" id="2.3.1.20"/>
    </reaction>
</comment>
<comment type="pathway">
    <text>Glycerolipid metabolism; triacylglycerol biosynthesis.</text>
</comment>
<comment type="induction">
    <text evidence="3">Constitutively expressed at a low level, it is not further induced by hypoxia or nitric oxide exposure.</text>
</comment>
<comment type="similarity">
    <text evidence="4">Belongs to the long-chain O-acyltransferase family.</text>
</comment>
<proteinExistence type="evidence at protein level"/>
<accession>P9WKB3</accession>
<accession>L0TCH6</accession>
<accession>O53209</accession>
<organism>
    <name type="scientific">Mycobacterium tuberculosis (strain ATCC 25618 / H37Rv)</name>
    <dbReference type="NCBI Taxonomy" id="83332"/>
    <lineage>
        <taxon>Bacteria</taxon>
        <taxon>Bacillati</taxon>
        <taxon>Actinomycetota</taxon>
        <taxon>Actinomycetes</taxon>
        <taxon>Mycobacteriales</taxon>
        <taxon>Mycobacteriaceae</taxon>
        <taxon>Mycobacterium</taxon>
        <taxon>Mycobacterium tuberculosis complex</taxon>
    </lineage>
</organism>
<dbReference type="EC" id="2.3.1.20" evidence="1"/>
<dbReference type="EMBL" id="AL123456">
    <property type="protein sequence ID" value="CCP45278.1"/>
    <property type="molecule type" value="Genomic_DNA"/>
</dbReference>
<dbReference type="PIR" id="C70868">
    <property type="entry name" value="C70868"/>
</dbReference>
<dbReference type="RefSeq" id="NP_217000.1">
    <property type="nucleotide sequence ID" value="NC_000962.3"/>
</dbReference>
<dbReference type="RefSeq" id="WP_003899345.1">
    <property type="nucleotide sequence ID" value="NZ_NVQJ01000067.1"/>
</dbReference>
<dbReference type="SMR" id="P9WKB3"/>
<dbReference type="STRING" id="83332.Rv2484c"/>
<dbReference type="PaxDb" id="83332-Rv2484c"/>
<dbReference type="DNASU" id="888623"/>
<dbReference type="GeneID" id="888623"/>
<dbReference type="KEGG" id="mtu:Rv2484c"/>
<dbReference type="KEGG" id="mtv:RVBD_2484c"/>
<dbReference type="TubercuList" id="Rv2484c"/>
<dbReference type="eggNOG" id="COG1020">
    <property type="taxonomic scope" value="Bacteria"/>
</dbReference>
<dbReference type="InParanoid" id="P9WKB3"/>
<dbReference type="OrthoDB" id="9810950at2"/>
<dbReference type="PhylomeDB" id="P9WKB3"/>
<dbReference type="UniPathway" id="UPA00282"/>
<dbReference type="Proteomes" id="UP000001584">
    <property type="component" value="Chromosome"/>
</dbReference>
<dbReference type="GO" id="GO:0005886">
    <property type="term" value="C:plasma membrane"/>
    <property type="evidence" value="ECO:0007005"/>
    <property type="project" value="MTBBASE"/>
</dbReference>
<dbReference type="GO" id="GO:0004144">
    <property type="term" value="F:diacylglycerol O-acyltransferase activity"/>
    <property type="evidence" value="ECO:0007669"/>
    <property type="project" value="UniProtKB-EC"/>
</dbReference>
<dbReference type="GO" id="GO:0008374">
    <property type="term" value="F:O-acyltransferase activity"/>
    <property type="evidence" value="ECO:0000318"/>
    <property type="project" value="GO_Central"/>
</dbReference>
<dbReference type="GO" id="GO:0051701">
    <property type="term" value="P:biological process involved in interaction with host"/>
    <property type="evidence" value="ECO:0000318"/>
    <property type="project" value="GO_Central"/>
</dbReference>
<dbReference type="GO" id="GO:0006071">
    <property type="term" value="P:glycerol metabolic process"/>
    <property type="evidence" value="ECO:0007669"/>
    <property type="project" value="UniProtKB-KW"/>
</dbReference>
<dbReference type="GO" id="GO:0001666">
    <property type="term" value="P:response to hypoxia"/>
    <property type="evidence" value="ECO:0000318"/>
    <property type="project" value="GO_Central"/>
</dbReference>
<dbReference type="GO" id="GO:0071731">
    <property type="term" value="P:response to nitric oxide"/>
    <property type="evidence" value="ECO:0000318"/>
    <property type="project" value="GO_Central"/>
</dbReference>
<dbReference type="GO" id="GO:0019432">
    <property type="term" value="P:triglyceride biosynthetic process"/>
    <property type="evidence" value="ECO:0000318"/>
    <property type="project" value="GO_Central"/>
</dbReference>
<dbReference type="Gene3D" id="3.30.559.10">
    <property type="entry name" value="Chloramphenicol acetyltransferase-like domain"/>
    <property type="match status" value="1"/>
</dbReference>
<dbReference type="InterPro" id="IPR014292">
    <property type="entry name" value="Acyl_transf_WS/DGAT"/>
</dbReference>
<dbReference type="InterPro" id="IPR023213">
    <property type="entry name" value="CAT-like_dom_sf"/>
</dbReference>
<dbReference type="InterPro" id="IPR045034">
    <property type="entry name" value="O-acyltransferase_WSD1-like"/>
</dbReference>
<dbReference type="InterPro" id="IPR009721">
    <property type="entry name" value="O-acyltransferase_WSD1_C"/>
</dbReference>
<dbReference type="InterPro" id="IPR004255">
    <property type="entry name" value="O-acyltransferase_WSD1_N"/>
</dbReference>
<dbReference type="NCBIfam" id="TIGR02946">
    <property type="entry name" value="acyl_WS_DGAT"/>
    <property type="match status" value="1"/>
</dbReference>
<dbReference type="PANTHER" id="PTHR31650">
    <property type="entry name" value="O-ACYLTRANSFERASE (WSD1-LIKE) FAMILY PROTEIN"/>
    <property type="match status" value="1"/>
</dbReference>
<dbReference type="PANTHER" id="PTHR31650:SF1">
    <property type="entry name" value="WAX ESTER SYNTHASE_DIACYLGLYCEROL ACYLTRANSFERASE 4-RELATED"/>
    <property type="match status" value="1"/>
</dbReference>
<dbReference type="Pfam" id="PF06974">
    <property type="entry name" value="WS_DGAT_C"/>
    <property type="match status" value="1"/>
</dbReference>
<dbReference type="Pfam" id="PF03007">
    <property type="entry name" value="WS_DGAT_cat"/>
    <property type="match status" value="1"/>
</dbReference>
<dbReference type="SUPFAM" id="SSF52777">
    <property type="entry name" value="CoA-dependent acyltransferases"/>
    <property type="match status" value="1"/>
</dbReference>
<feature type="chain" id="PRO_0000222912" description="Putative diacyglycerol O-acyltransferase Rv2484c">
    <location>
        <begin position="1"/>
        <end position="491"/>
    </location>
</feature>
<feature type="active site" description="Proton acceptor" evidence="2">
    <location>
        <position position="145"/>
    </location>
</feature>
<sequence length="491" mass="52309">MAESGESPRLSDELGPVDYLMHRGEANPRTRSGIMALELLDGTPDWDRFRTRFENASRRVLRLRQKVVVPTLPTAAPRWVVDPDFNLDFHVRRVRVSGPATLREVLDLAEVILQSPLDISRPLWTATLVEGMADGRAAMLLHVSHAVTDGVGGVEMFAQIYDLERDPPPRSTPPQPIPEDLSPNDLMRRGINHLPIAVVGGVLDALSGAVSMAGRAVLEPVSTVSGILGYARSGIRVLNRAAEPSPLLRRRSLTTRTEAIDIRLADLHKAAKAGGGSINDAYLAGLCGALRRYHEALGVPISTLPMAVPVNLRAEGDAAGGNQFTGVNLAAPVGTIDPVARMKKIRAQMTQRRDEPAMNIIGSIAPVLSVLPTAVLEGITGSVIGSDVQASNVPVYPGDTYLAGAKILRQYGIGPLPGVAMMVVLISRGGWCTVTVRYDRASVRNDELFAQCLQAGFDEILALAGGPAPRVLPASFDTQGAGSVPRSVSGS</sequence>
<gene>
    <name type="ordered locus">Rv2484c</name>
    <name type="ORF">MTV008.40c</name>
</gene>
<reference key="1">
    <citation type="journal article" date="1998" name="Nature">
        <title>Deciphering the biology of Mycobacterium tuberculosis from the complete genome sequence.</title>
        <authorList>
            <person name="Cole S.T."/>
            <person name="Brosch R."/>
            <person name="Parkhill J."/>
            <person name="Garnier T."/>
            <person name="Churcher C.M."/>
            <person name="Harris D.E."/>
            <person name="Gordon S.V."/>
            <person name="Eiglmeier K."/>
            <person name="Gas S."/>
            <person name="Barry C.E. III"/>
            <person name="Tekaia F."/>
            <person name="Badcock K."/>
            <person name="Basham D."/>
            <person name="Brown D."/>
            <person name="Chillingworth T."/>
            <person name="Connor R."/>
            <person name="Davies R.M."/>
            <person name="Devlin K."/>
            <person name="Feltwell T."/>
            <person name="Gentles S."/>
            <person name="Hamlin N."/>
            <person name="Holroyd S."/>
            <person name="Hornsby T."/>
            <person name="Jagels K."/>
            <person name="Krogh A."/>
            <person name="McLean J."/>
            <person name="Moule S."/>
            <person name="Murphy L.D."/>
            <person name="Oliver S."/>
            <person name="Osborne J."/>
            <person name="Quail M.A."/>
            <person name="Rajandream M.A."/>
            <person name="Rogers J."/>
            <person name="Rutter S."/>
            <person name="Seeger K."/>
            <person name="Skelton S."/>
            <person name="Squares S."/>
            <person name="Squares R."/>
            <person name="Sulston J.E."/>
            <person name="Taylor K."/>
            <person name="Whitehead S."/>
            <person name="Barrell B.G."/>
        </authorList>
    </citation>
    <scope>NUCLEOTIDE SEQUENCE [LARGE SCALE GENOMIC DNA]</scope>
    <source>
        <strain>ATCC 25618 / H37Rv</strain>
    </source>
</reference>
<reference key="2">
    <citation type="journal article" date="2004" name="J. Bacteriol.">
        <title>Induction of a novel class of diacylglycerol acyltransferases and triacylglycerol accumulation in Mycobacterium tuberculosis as it goes into a dormancy-like state in culture.</title>
        <authorList>
            <person name="Daniel J."/>
            <person name="Deb C."/>
            <person name="Dubey V.S."/>
            <person name="Sirakova T.D."/>
            <person name="Abomoelak B."/>
            <person name="Morbidoni H.R."/>
            <person name="Kolattukudy P.E."/>
        </authorList>
    </citation>
    <scope>EXPRESSION IN E.COLI</scope>
    <scope>INDUCTION</scope>
    <source>
        <strain>ATCC 25618 / H37Rv</strain>
    </source>
</reference>
<reference key="3">
    <citation type="journal article" date="2011" name="Mol. Cell. Proteomics">
        <title>Proteogenomic analysis of Mycobacterium tuberculosis by high resolution mass spectrometry.</title>
        <authorList>
            <person name="Kelkar D.S."/>
            <person name="Kumar D."/>
            <person name="Kumar P."/>
            <person name="Balakrishnan L."/>
            <person name="Muthusamy B."/>
            <person name="Yadav A.K."/>
            <person name="Shrivastava P."/>
            <person name="Marimuthu A."/>
            <person name="Anand S."/>
            <person name="Sundaram H."/>
            <person name="Kingsbury R."/>
            <person name="Harsha H.C."/>
            <person name="Nair B."/>
            <person name="Prasad T.S."/>
            <person name="Chauhan D.S."/>
            <person name="Katoch K."/>
            <person name="Katoch V.M."/>
            <person name="Kumar P."/>
            <person name="Chaerkady R."/>
            <person name="Ramachandran S."/>
            <person name="Dash D."/>
            <person name="Pandey A."/>
        </authorList>
    </citation>
    <scope>IDENTIFICATION BY MASS SPECTROMETRY [LARGE SCALE ANALYSIS]</scope>
    <source>
        <strain>ATCC 25618 / H37Rv</strain>
    </source>
</reference>
<evidence type="ECO:0000250" key="1">
    <source>
        <dbReference type="UniProtKB" id="P9WKC9"/>
    </source>
</evidence>
<evidence type="ECO:0000255" key="2"/>
<evidence type="ECO:0000269" key="3">
    <source>
    </source>
</evidence>
<evidence type="ECO:0000305" key="4"/>
<keyword id="KW-0012">Acyltransferase</keyword>
<keyword id="KW-0319">Glycerol metabolism</keyword>
<keyword id="KW-0444">Lipid biosynthesis</keyword>
<keyword id="KW-0443">Lipid metabolism</keyword>
<keyword id="KW-1185">Reference proteome</keyword>
<keyword id="KW-0808">Transferase</keyword>
<name>Y2484_MYCTU</name>